<accession>Q6CP50</accession>
<comment type="function">
    <text evidence="2">tRNA methylase which 2'-O-methylates cytidine(4) in tRNA(Pro) and tRNA(Gly)(GCC), and adenosine(4) in tRNA(His).</text>
</comment>
<comment type="catalytic activity">
    <reaction evidence="2">
        <text>cytidine(4) in tRNA(Pro) + S-adenosyl-L-methionine = 2'-O-methylcytidine(4) in tRNA(Pro) + S-adenosyl-L-homocysteine + H(+)</text>
        <dbReference type="Rhea" id="RHEA:32767"/>
        <dbReference type="Rhea" id="RHEA-COMP:10397"/>
        <dbReference type="Rhea" id="RHEA-COMP:10398"/>
        <dbReference type="ChEBI" id="CHEBI:15378"/>
        <dbReference type="ChEBI" id="CHEBI:57856"/>
        <dbReference type="ChEBI" id="CHEBI:59789"/>
        <dbReference type="ChEBI" id="CHEBI:74495"/>
        <dbReference type="ChEBI" id="CHEBI:82748"/>
        <dbReference type="EC" id="2.1.1.225"/>
    </reaction>
</comment>
<comment type="catalytic activity">
    <reaction evidence="2">
        <text>cytidine(4) in tRNA(Gly)(GCC) + S-adenosyl-L-methionine = 2'-O-methylcytidine(4) in tRNA(Gly)(GCC) + S-adenosyl-L-homocysteine + H(+)</text>
        <dbReference type="Rhea" id="RHEA:43192"/>
        <dbReference type="Rhea" id="RHEA-COMP:10399"/>
        <dbReference type="Rhea" id="RHEA-COMP:10400"/>
        <dbReference type="ChEBI" id="CHEBI:15378"/>
        <dbReference type="ChEBI" id="CHEBI:57856"/>
        <dbReference type="ChEBI" id="CHEBI:59789"/>
        <dbReference type="ChEBI" id="CHEBI:74495"/>
        <dbReference type="ChEBI" id="CHEBI:82748"/>
        <dbReference type="EC" id="2.1.1.225"/>
    </reaction>
</comment>
<comment type="catalytic activity">
    <reaction evidence="2">
        <text>adenosine(4) in tRNA(His) + S-adenosyl-L-methionine = 2'-O-methyladenosine(4) in tRNA(His) + S-adenosyl-L-homocysteine + H(+)</text>
        <dbReference type="Rhea" id="RHEA:43196"/>
        <dbReference type="Rhea" id="RHEA-COMP:10401"/>
        <dbReference type="Rhea" id="RHEA-COMP:10402"/>
        <dbReference type="ChEBI" id="CHEBI:15378"/>
        <dbReference type="ChEBI" id="CHEBI:57856"/>
        <dbReference type="ChEBI" id="CHEBI:59789"/>
        <dbReference type="ChEBI" id="CHEBI:74411"/>
        <dbReference type="ChEBI" id="CHEBI:74477"/>
        <dbReference type="EC" id="2.1.1.225"/>
    </reaction>
</comment>
<comment type="subcellular location">
    <subcellularLocation>
        <location evidence="1">Cytoplasm</location>
    </subcellularLocation>
    <subcellularLocation>
        <location evidence="1">Nucleus</location>
        <location evidence="1">Nucleolus</location>
    </subcellularLocation>
</comment>
<comment type="similarity">
    <text evidence="4">Belongs to the methyltransferase TRM13 family.</text>
</comment>
<reference key="1">
    <citation type="journal article" date="2004" name="Nature">
        <title>Genome evolution in yeasts.</title>
        <authorList>
            <person name="Dujon B."/>
            <person name="Sherman D."/>
            <person name="Fischer G."/>
            <person name="Durrens P."/>
            <person name="Casaregola S."/>
            <person name="Lafontaine I."/>
            <person name="de Montigny J."/>
            <person name="Marck C."/>
            <person name="Neuveglise C."/>
            <person name="Talla E."/>
            <person name="Goffard N."/>
            <person name="Frangeul L."/>
            <person name="Aigle M."/>
            <person name="Anthouard V."/>
            <person name="Babour A."/>
            <person name="Barbe V."/>
            <person name="Barnay S."/>
            <person name="Blanchin S."/>
            <person name="Beckerich J.-M."/>
            <person name="Beyne E."/>
            <person name="Bleykasten C."/>
            <person name="Boisrame A."/>
            <person name="Boyer J."/>
            <person name="Cattolico L."/>
            <person name="Confanioleri F."/>
            <person name="de Daruvar A."/>
            <person name="Despons L."/>
            <person name="Fabre E."/>
            <person name="Fairhead C."/>
            <person name="Ferry-Dumazet H."/>
            <person name="Groppi A."/>
            <person name="Hantraye F."/>
            <person name="Hennequin C."/>
            <person name="Jauniaux N."/>
            <person name="Joyet P."/>
            <person name="Kachouri R."/>
            <person name="Kerrest A."/>
            <person name="Koszul R."/>
            <person name="Lemaire M."/>
            <person name="Lesur I."/>
            <person name="Ma L."/>
            <person name="Muller H."/>
            <person name="Nicaud J.-M."/>
            <person name="Nikolski M."/>
            <person name="Oztas S."/>
            <person name="Ozier-Kalogeropoulos O."/>
            <person name="Pellenz S."/>
            <person name="Potier S."/>
            <person name="Richard G.-F."/>
            <person name="Straub M.-L."/>
            <person name="Suleau A."/>
            <person name="Swennen D."/>
            <person name="Tekaia F."/>
            <person name="Wesolowski-Louvel M."/>
            <person name="Westhof E."/>
            <person name="Wirth B."/>
            <person name="Zeniou-Meyer M."/>
            <person name="Zivanovic Y."/>
            <person name="Bolotin-Fukuhara M."/>
            <person name="Thierry A."/>
            <person name="Bouchier C."/>
            <person name="Caudron B."/>
            <person name="Scarpelli C."/>
            <person name="Gaillardin C."/>
            <person name="Weissenbach J."/>
            <person name="Wincker P."/>
            <person name="Souciet J.-L."/>
        </authorList>
    </citation>
    <scope>NUCLEOTIDE SEQUENCE [LARGE SCALE GENOMIC DNA]</scope>
    <source>
        <strain>ATCC 8585 / CBS 2359 / DSM 70799 / NBRC 1267 / NRRL Y-1140 / WM37</strain>
    </source>
</reference>
<feature type="chain" id="PRO_0000339423" description="tRNA:m(4)X modification enzyme TRM13">
    <location>
        <begin position="1"/>
        <end position="434"/>
    </location>
</feature>
<feature type="zinc finger region" description="CHHC U11-48K-type" evidence="3">
    <location>
        <begin position="51"/>
        <end position="78"/>
    </location>
</feature>
<feature type="binding site" evidence="3">
    <location>
        <position position="54"/>
    </location>
    <ligand>
        <name>Zn(2+)</name>
        <dbReference type="ChEBI" id="CHEBI:29105"/>
    </ligand>
</feature>
<feature type="binding site" evidence="3">
    <location>
        <position position="60"/>
    </location>
    <ligand>
        <name>Zn(2+)</name>
        <dbReference type="ChEBI" id="CHEBI:29105"/>
    </ligand>
</feature>
<feature type="binding site" evidence="3">
    <location>
        <position position="70"/>
    </location>
    <ligand>
        <name>Zn(2+)</name>
        <dbReference type="ChEBI" id="CHEBI:29105"/>
    </ligand>
</feature>
<feature type="binding site" evidence="3">
    <location>
        <position position="74"/>
    </location>
    <ligand>
        <name>Zn(2+)</name>
        <dbReference type="ChEBI" id="CHEBI:29105"/>
    </ligand>
</feature>
<sequence length="434" mass="49673">MMAVTVSGNTGQSTAERLQCEFFLVKKKRQCGMTRRAGSQFCSEHSTDSDRVPCPLDPSHTVCLSKMRVHMRKCNKFRHDVSYQAKQREIPWFKEGLNSISNGKSDSKPADETLVKSVSLIQKIFQNEFGDEPPLPLIEKQNELLERTERYKTLVNRKHARQQSSLIQHLKESKLWPSLESCAVNKTLEYIELGCGRAEFSRYVNIATNLDQKEHSHEKPEYKAVAPSFTLIDRASQRLRFDNKFSSDIGTEVQIRREKIDIKDLRLDAVLHDASQYVAISKHLCGVATDLSLRCLLNSDKCKANLRGILIAMCCRHVCQSSEYVNQEYIKGLLKRQTDGSMAYSEFFQCLKKFCSYCTCGLRPDMDPNSGSEDHITKLTHNERQRIGHMARRIIDEGRAQFLQSKGFETVLFKYTDSAVTLEDTALLALRKHD</sequence>
<evidence type="ECO:0000250" key="1"/>
<evidence type="ECO:0000250" key="2">
    <source>
        <dbReference type="UniProtKB" id="Q12383"/>
    </source>
</evidence>
<evidence type="ECO:0000255" key="3">
    <source>
        <dbReference type="PROSITE-ProRule" id="PRU01141"/>
    </source>
</evidence>
<evidence type="ECO:0000305" key="4"/>
<keyword id="KW-0963">Cytoplasm</keyword>
<keyword id="KW-0479">Metal-binding</keyword>
<keyword id="KW-0489">Methyltransferase</keyword>
<keyword id="KW-0539">Nucleus</keyword>
<keyword id="KW-1185">Reference proteome</keyword>
<keyword id="KW-0949">S-adenosyl-L-methionine</keyword>
<keyword id="KW-0808">Transferase</keyword>
<keyword id="KW-0819">tRNA processing</keyword>
<keyword id="KW-0862">Zinc</keyword>
<keyword id="KW-0863">Zinc-finger</keyword>
<dbReference type="EC" id="2.1.1.225"/>
<dbReference type="EMBL" id="CR382125">
    <property type="protein sequence ID" value="CAG99376.1"/>
    <property type="molecule type" value="Genomic_DNA"/>
</dbReference>
<dbReference type="RefSeq" id="XP_454289.1">
    <property type="nucleotide sequence ID" value="XM_454289.1"/>
</dbReference>
<dbReference type="FunCoup" id="Q6CP50">
    <property type="interactions" value="492"/>
</dbReference>
<dbReference type="STRING" id="284590.Q6CP50"/>
<dbReference type="PaxDb" id="284590-Q6CP50"/>
<dbReference type="KEGG" id="kla:KLLA0_E07547g"/>
<dbReference type="eggNOG" id="KOG2811">
    <property type="taxonomic scope" value="Eukaryota"/>
</dbReference>
<dbReference type="HOGENOM" id="CLU_027610_0_0_1"/>
<dbReference type="InParanoid" id="Q6CP50"/>
<dbReference type="OMA" id="HRCSWRS"/>
<dbReference type="Proteomes" id="UP000000598">
    <property type="component" value="Chromosome E"/>
</dbReference>
<dbReference type="GO" id="GO:0005737">
    <property type="term" value="C:cytoplasm"/>
    <property type="evidence" value="ECO:0007669"/>
    <property type="project" value="UniProtKB-SubCell"/>
</dbReference>
<dbReference type="GO" id="GO:0005730">
    <property type="term" value="C:nucleolus"/>
    <property type="evidence" value="ECO:0007669"/>
    <property type="project" value="UniProtKB-SubCell"/>
</dbReference>
<dbReference type="GO" id="GO:0106050">
    <property type="term" value="F:tRNA 2'-O-methyltransferase activity"/>
    <property type="evidence" value="ECO:0007669"/>
    <property type="project" value="InterPro"/>
</dbReference>
<dbReference type="GO" id="GO:0008270">
    <property type="term" value="F:zinc ion binding"/>
    <property type="evidence" value="ECO:0007669"/>
    <property type="project" value="UniProtKB-KW"/>
</dbReference>
<dbReference type="GO" id="GO:0030488">
    <property type="term" value="P:tRNA methylation"/>
    <property type="evidence" value="ECO:0007669"/>
    <property type="project" value="InterPro"/>
</dbReference>
<dbReference type="InterPro" id="IPR007871">
    <property type="entry name" value="Methyltransferase_TRM13"/>
</dbReference>
<dbReference type="InterPro" id="IPR039044">
    <property type="entry name" value="Trm13"/>
</dbReference>
<dbReference type="InterPro" id="IPR022776">
    <property type="entry name" value="TRM13/UPF0224_CHHC_Znf_dom"/>
</dbReference>
<dbReference type="InterPro" id="IPR021721">
    <property type="entry name" value="Znf_CCCH-type_TRM13"/>
</dbReference>
<dbReference type="PANTHER" id="PTHR12998">
    <property type="entry name" value="TRNA:M(4)X MODIFICATION ENZYME TRM13 HOMOLOG"/>
    <property type="match status" value="1"/>
</dbReference>
<dbReference type="PANTHER" id="PTHR12998:SF0">
    <property type="entry name" value="TRNA:M(4)X MODIFICATION ENZYME TRM13 HOMOLOG"/>
    <property type="match status" value="1"/>
</dbReference>
<dbReference type="Pfam" id="PF05206">
    <property type="entry name" value="TRM13"/>
    <property type="match status" value="1"/>
</dbReference>
<dbReference type="Pfam" id="PF11722">
    <property type="entry name" value="zf-TRM13_CCCH"/>
    <property type="match status" value="1"/>
</dbReference>
<dbReference type="Pfam" id="PF05253">
    <property type="entry name" value="zf-U11-48K"/>
    <property type="match status" value="1"/>
</dbReference>
<dbReference type="PROSITE" id="PS51800">
    <property type="entry name" value="ZF_CHHC_U11_48K"/>
    <property type="match status" value="1"/>
</dbReference>
<protein>
    <recommendedName>
        <fullName>tRNA:m(4)X modification enzyme TRM13</fullName>
        <ecNumber>2.1.1.225</ecNumber>
    </recommendedName>
    <alternativeName>
        <fullName>tRNA methylase 13</fullName>
    </alternativeName>
</protein>
<gene>
    <name type="primary">TRM13</name>
    <name type="ordered locus">KLLA0E07524g</name>
</gene>
<proteinExistence type="inferred from homology"/>
<organism>
    <name type="scientific">Kluyveromyces lactis (strain ATCC 8585 / CBS 2359 / DSM 70799 / NBRC 1267 / NRRL Y-1140 / WM37)</name>
    <name type="common">Yeast</name>
    <name type="synonym">Candida sphaerica</name>
    <dbReference type="NCBI Taxonomy" id="284590"/>
    <lineage>
        <taxon>Eukaryota</taxon>
        <taxon>Fungi</taxon>
        <taxon>Dikarya</taxon>
        <taxon>Ascomycota</taxon>
        <taxon>Saccharomycotina</taxon>
        <taxon>Saccharomycetes</taxon>
        <taxon>Saccharomycetales</taxon>
        <taxon>Saccharomycetaceae</taxon>
        <taxon>Kluyveromyces</taxon>
    </lineage>
</organism>
<name>TRM13_KLULA</name>